<proteinExistence type="inferred from homology"/>
<gene>
    <name evidence="1" type="primary">rplB</name>
    <name type="ordered locus">SP_0212</name>
</gene>
<evidence type="ECO:0000255" key="1">
    <source>
        <dbReference type="HAMAP-Rule" id="MF_01320"/>
    </source>
</evidence>
<evidence type="ECO:0000256" key="2">
    <source>
        <dbReference type="SAM" id="MobiDB-lite"/>
    </source>
</evidence>
<evidence type="ECO:0000305" key="3"/>
<reference key="1">
    <citation type="journal article" date="2001" name="Science">
        <title>Complete genome sequence of a virulent isolate of Streptococcus pneumoniae.</title>
        <authorList>
            <person name="Tettelin H."/>
            <person name="Nelson K.E."/>
            <person name="Paulsen I.T."/>
            <person name="Eisen J.A."/>
            <person name="Read T.D."/>
            <person name="Peterson S.N."/>
            <person name="Heidelberg J.F."/>
            <person name="DeBoy R.T."/>
            <person name="Haft D.H."/>
            <person name="Dodson R.J."/>
            <person name="Durkin A.S."/>
            <person name="Gwinn M.L."/>
            <person name="Kolonay J.F."/>
            <person name="Nelson W.C."/>
            <person name="Peterson J.D."/>
            <person name="Umayam L.A."/>
            <person name="White O."/>
            <person name="Salzberg S.L."/>
            <person name="Lewis M.R."/>
            <person name="Radune D."/>
            <person name="Holtzapple E.K."/>
            <person name="Khouri H.M."/>
            <person name="Wolf A.M."/>
            <person name="Utterback T.R."/>
            <person name="Hansen C.L."/>
            <person name="McDonald L.A."/>
            <person name="Feldblyum T.V."/>
            <person name="Angiuoli S.V."/>
            <person name="Dickinson T."/>
            <person name="Hickey E.K."/>
            <person name="Holt I.E."/>
            <person name="Loftus B.J."/>
            <person name="Yang F."/>
            <person name="Smith H.O."/>
            <person name="Venter J.C."/>
            <person name="Dougherty B.A."/>
            <person name="Morrison D.A."/>
            <person name="Hollingshead S.K."/>
            <person name="Fraser C.M."/>
        </authorList>
    </citation>
    <scope>NUCLEOTIDE SEQUENCE [LARGE SCALE GENOMIC DNA]</scope>
    <source>
        <strain>ATCC BAA-334 / TIGR4</strain>
    </source>
</reference>
<organism>
    <name type="scientific">Streptococcus pneumoniae serotype 4 (strain ATCC BAA-334 / TIGR4)</name>
    <dbReference type="NCBI Taxonomy" id="170187"/>
    <lineage>
        <taxon>Bacteria</taxon>
        <taxon>Bacillati</taxon>
        <taxon>Bacillota</taxon>
        <taxon>Bacilli</taxon>
        <taxon>Lactobacillales</taxon>
        <taxon>Streptococcaceae</taxon>
        <taxon>Streptococcus</taxon>
    </lineage>
</organism>
<comment type="function">
    <text evidence="1">One of the primary rRNA binding proteins. Required for association of the 30S and 50S subunits to form the 70S ribosome, for tRNA binding and peptide bond formation. It has been suggested to have peptidyltransferase activity; this is somewhat controversial. Makes several contacts with the 16S rRNA in the 70S ribosome.</text>
</comment>
<comment type="subunit">
    <text evidence="1">Part of the 50S ribosomal subunit. Forms a bridge to the 30S subunit in the 70S ribosome.</text>
</comment>
<comment type="similarity">
    <text evidence="1">Belongs to the universal ribosomal protein uL2 family.</text>
</comment>
<dbReference type="EMBL" id="AE005672">
    <property type="protein sequence ID" value="AAK74392.1"/>
    <property type="molecule type" value="Genomic_DNA"/>
</dbReference>
<dbReference type="PIR" id="G95024">
    <property type="entry name" value="G95024"/>
</dbReference>
<dbReference type="PIR" id="G97895">
    <property type="entry name" value="G97895"/>
</dbReference>
<dbReference type="RefSeq" id="WP_000512911.1">
    <property type="nucleotide sequence ID" value="NZ_CP155539.1"/>
</dbReference>
<dbReference type="SMR" id="Q97SV2"/>
<dbReference type="PaxDb" id="170187-SP_0212"/>
<dbReference type="EnsemblBacteria" id="AAK74392">
    <property type="protein sequence ID" value="AAK74392"/>
    <property type="gene ID" value="SP_0212"/>
</dbReference>
<dbReference type="GeneID" id="93738960"/>
<dbReference type="KEGG" id="spn:SP_0212"/>
<dbReference type="eggNOG" id="COG0090">
    <property type="taxonomic scope" value="Bacteria"/>
</dbReference>
<dbReference type="PhylomeDB" id="Q97SV2"/>
<dbReference type="BioCyc" id="SPNE170187:G1FZB-217-MONOMER"/>
<dbReference type="Proteomes" id="UP000000585">
    <property type="component" value="Chromosome"/>
</dbReference>
<dbReference type="GO" id="GO:0015934">
    <property type="term" value="C:large ribosomal subunit"/>
    <property type="evidence" value="ECO:0007669"/>
    <property type="project" value="InterPro"/>
</dbReference>
<dbReference type="GO" id="GO:0019843">
    <property type="term" value="F:rRNA binding"/>
    <property type="evidence" value="ECO:0007669"/>
    <property type="project" value="UniProtKB-UniRule"/>
</dbReference>
<dbReference type="GO" id="GO:0003735">
    <property type="term" value="F:structural constituent of ribosome"/>
    <property type="evidence" value="ECO:0007669"/>
    <property type="project" value="InterPro"/>
</dbReference>
<dbReference type="GO" id="GO:0016740">
    <property type="term" value="F:transferase activity"/>
    <property type="evidence" value="ECO:0007669"/>
    <property type="project" value="InterPro"/>
</dbReference>
<dbReference type="GO" id="GO:0002181">
    <property type="term" value="P:cytoplasmic translation"/>
    <property type="evidence" value="ECO:0007669"/>
    <property type="project" value="TreeGrafter"/>
</dbReference>
<dbReference type="FunFam" id="2.30.30.30:FF:000001">
    <property type="entry name" value="50S ribosomal protein L2"/>
    <property type="match status" value="1"/>
</dbReference>
<dbReference type="FunFam" id="2.40.50.140:FF:000003">
    <property type="entry name" value="50S ribosomal protein L2"/>
    <property type="match status" value="1"/>
</dbReference>
<dbReference type="FunFam" id="4.10.950.10:FF:000001">
    <property type="entry name" value="50S ribosomal protein L2"/>
    <property type="match status" value="1"/>
</dbReference>
<dbReference type="Gene3D" id="2.30.30.30">
    <property type="match status" value="1"/>
</dbReference>
<dbReference type="Gene3D" id="2.40.50.140">
    <property type="entry name" value="Nucleic acid-binding proteins"/>
    <property type="match status" value="1"/>
</dbReference>
<dbReference type="Gene3D" id="4.10.950.10">
    <property type="entry name" value="Ribosomal protein L2, domain 3"/>
    <property type="match status" value="1"/>
</dbReference>
<dbReference type="HAMAP" id="MF_01320_B">
    <property type="entry name" value="Ribosomal_uL2_B"/>
    <property type="match status" value="1"/>
</dbReference>
<dbReference type="InterPro" id="IPR012340">
    <property type="entry name" value="NA-bd_OB-fold"/>
</dbReference>
<dbReference type="InterPro" id="IPR014722">
    <property type="entry name" value="Rib_uL2_dom2"/>
</dbReference>
<dbReference type="InterPro" id="IPR002171">
    <property type="entry name" value="Ribosomal_uL2"/>
</dbReference>
<dbReference type="InterPro" id="IPR005880">
    <property type="entry name" value="Ribosomal_uL2_bac/org-type"/>
</dbReference>
<dbReference type="InterPro" id="IPR022669">
    <property type="entry name" value="Ribosomal_uL2_C"/>
</dbReference>
<dbReference type="InterPro" id="IPR022671">
    <property type="entry name" value="Ribosomal_uL2_CS"/>
</dbReference>
<dbReference type="InterPro" id="IPR014726">
    <property type="entry name" value="Ribosomal_uL2_dom3"/>
</dbReference>
<dbReference type="InterPro" id="IPR022666">
    <property type="entry name" value="Ribosomal_uL2_RNA-bd_dom"/>
</dbReference>
<dbReference type="InterPro" id="IPR008991">
    <property type="entry name" value="Translation_prot_SH3-like_sf"/>
</dbReference>
<dbReference type="NCBIfam" id="TIGR01171">
    <property type="entry name" value="rplB_bact"/>
    <property type="match status" value="1"/>
</dbReference>
<dbReference type="PANTHER" id="PTHR13691:SF5">
    <property type="entry name" value="LARGE RIBOSOMAL SUBUNIT PROTEIN UL2M"/>
    <property type="match status" value="1"/>
</dbReference>
<dbReference type="PANTHER" id="PTHR13691">
    <property type="entry name" value="RIBOSOMAL PROTEIN L2"/>
    <property type="match status" value="1"/>
</dbReference>
<dbReference type="Pfam" id="PF00181">
    <property type="entry name" value="Ribosomal_L2"/>
    <property type="match status" value="1"/>
</dbReference>
<dbReference type="Pfam" id="PF03947">
    <property type="entry name" value="Ribosomal_L2_C"/>
    <property type="match status" value="1"/>
</dbReference>
<dbReference type="PIRSF" id="PIRSF002158">
    <property type="entry name" value="Ribosomal_L2"/>
    <property type="match status" value="1"/>
</dbReference>
<dbReference type="SMART" id="SM01383">
    <property type="entry name" value="Ribosomal_L2"/>
    <property type="match status" value="1"/>
</dbReference>
<dbReference type="SMART" id="SM01382">
    <property type="entry name" value="Ribosomal_L2_C"/>
    <property type="match status" value="1"/>
</dbReference>
<dbReference type="SUPFAM" id="SSF50249">
    <property type="entry name" value="Nucleic acid-binding proteins"/>
    <property type="match status" value="1"/>
</dbReference>
<dbReference type="SUPFAM" id="SSF50104">
    <property type="entry name" value="Translation proteins SH3-like domain"/>
    <property type="match status" value="1"/>
</dbReference>
<dbReference type="PROSITE" id="PS00467">
    <property type="entry name" value="RIBOSOMAL_L2"/>
    <property type="match status" value="1"/>
</dbReference>
<feature type="chain" id="PRO_0000129630" description="Large ribosomal subunit protein uL2">
    <location>
        <begin position="1"/>
        <end position="277"/>
    </location>
</feature>
<feature type="region of interest" description="Disordered" evidence="2">
    <location>
        <begin position="219"/>
        <end position="277"/>
    </location>
</feature>
<feature type="compositionally biased region" description="Basic and acidic residues" evidence="2">
    <location>
        <begin position="264"/>
        <end position="277"/>
    </location>
</feature>
<name>RL2_STRPN</name>
<protein>
    <recommendedName>
        <fullName evidence="1">Large ribosomal subunit protein uL2</fullName>
    </recommendedName>
    <alternativeName>
        <fullName evidence="3">50S ribosomal protein L2</fullName>
    </alternativeName>
</protein>
<sequence length="277" mass="29920">MGIRVYKPTTNGRRNMTSLDFAEITTSTPEKSLLVALKSKAGRNNNGRITVRHQGGGHKRFYRLVDFKRNKDNVEAVVKTIEYDPNRSANIALVHYTDGVKAYIIAPKGLEVGQRIVSGPEADIKVGNALPLANIPVGTLIHNIELKPGRGGELVRAAGASAQVLGSEGKYVLVRLQSGEVRMILGTCRATVGVVGNEQHGLVNLGKAGRSRWKGIRPTVRGSVMNPNDHPHGGGEGKAPVGRKAPSTPWGKPALGLKTRNKKAKSDKLIVRRRNEK</sequence>
<accession>Q97SV2</accession>
<keyword id="KW-1185">Reference proteome</keyword>
<keyword id="KW-0687">Ribonucleoprotein</keyword>
<keyword id="KW-0689">Ribosomal protein</keyword>
<keyword id="KW-0694">RNA-binding</keyword>
<keyword id="KW-0699">rRNA-binding</keyword>